<proteinExistence type="inferred from homology"/>
<keyword id="KW-0030">Aminoacyl-tRNA synthetase</keyword>
<keyword id="KW-0067">ATP-binding</keyword>
<keyword id="KW-0963">Cytoplasm</keyword>
<keyword id="KW-0436">Ligase</keyword>
<keyword id="KW-0547">Nucleotide-binding</keyword>
<keyword id="KW-0648">Protein biosynthesis</keyword>
<keyword id="KW-1185">Reference proteome</keyword>
<sequence length="561" mass="61398">MIQAKEELLAALGLALAELVPGSDLAPAFENPKQAAHGDLAITAAMQLARPLRKNPRELAQALVEALGRQPAAQKWVDAMELAGPGFINLRLKPAARQQVVSAVLSQREGFGVRAPNGQRVMVEFVSANPTGPLHVGHGRQAALGDAICNVFATQGWAVHREFYYNDAGVQIGTLASSTQCRLRGLKPGDAEWPASAYNGDYIADIAREFLAGATVKADDRAFTASGEVEDIDSIRQFAVAYLRHEQDLDLQAFGVRFDHYYLESGLYSSGRVEEAVAKLTAAGKTFEEGGALWLRSTDYGDDKDRVMKKSDGTYTYFVPDVAYHIHKWERGFDKVINIQGSDHHGTIARVRAGLQAAGVGVPQGWPDYVLHKMVTVMKGGEEVKISKRAGSYVTLRDLIDWTSRDAVRFFLISRKADTEFVFDVDLALKANDENPVYYVQYAHARVCSVLARYVEEHQGDLATLADADLSLLAEPTEFALMNKLAEYPEMLGAAAADLAPHNVAFYLRDLAAHYHSYYGAVRFLDGAVEPMRARMALLEATAQVLRNALAVLGVSAPRKM</sequence>
<name>SYR_LEPCP</name>
<protein>
    <recommendedName>
        <fullName evidence="1">Arginine--tRNA ligase</fullName>
        <ecNumber evidence="1">6.1.1.19</ecNumber>
    </recommendedName>
    <alternativeName>
        <fullName evidence="1">Arginyl-tRNA synthetase</fullName>
        <shortName evidence="1">ArgRS</shortName>
    </alternativeName>
</protein>
<organism>
    <name type="scientific">Leptothrix cholodnii (strain ATCC 51168 / LMG 8142 / SP-6)</name>
    <name type="common">Leptothrix discophora (strain SP-6)</name>
    <dbReference type="NCBI Taxonomy" id="395495"/>
    <lineage>
        <taxon>Bacteria</taxon>
        <taxon>Pseudomonadati</taxon>
        <taxon>Pseudomonadota</taxon>
        <taxon>Betaproteobacteria</taxon>
        <taxon>Burkholderiales</taxon>
        <taxon>Sphaerotilaceae</taxon>
        <taxon>Leptothrix</taxon>
    </lineage>
</organism>
<comment type="catalytic activity">
    <reaction evidence="1">
        <text>tRNA(Arg) + L-arginine + ATP = L-arginyl-tRNA(Arg) + AMP + diphosphate</text>
        <dbReference type="Rhea" id="RHEA:20301"/>
        <dbReference type="Rhea" id="RHEA-COMP:9658"/>
        <dbReference type="Rhea" id="RHEA-COMP:9673"/>
        <dbReference type="ChEBI" id="CHEBI:30616"/>
        <dbReference type="ChEBI" id="CHEBI:32682"/>
        <dbReference type="ChEBI" id="CHEBI:33019"/>
        <dbReference type="ChEBI" id="CHEBI:78442"/>
        <dbReference type="ChEBI" id="CHEBI:78513"/>
        <dbReference type="ChEBI" id="CHEBI:456215"/>
        <dbReference type="EC" id="6.1.1.19"/>
    </reaction>
</comment>
<comment type="subunit">
    <text evidence="1">Monomer.</text>
</comment>
<comment type="subcellular location">
    <subcellularLocation>
        <location evidence="1">Cytoplasm</location>
    </subcellularLocation>
</comment>
<comment type="similarity">
    <text evidence="1">Belongs to the class-I aminoacyl-tRNA synthetase family.</text>
</comment>
<feature type="chain" id="PRO_1000095377" description="Arginine--tRNA ligase">
    <location>
        <begin position="1"/>
        <end position="561"/>
    </location>
</feature>
<feature type="short sequence motif" description="'HIGH' region">
    <location>
        <begin position="128"/>
        <end position="138"/>
    </location>
</feature>
<gene>
    <name evidence="1" type="primary">argS</name>
    <name type="ordered locus">Lcho_4230</name>
</gene>
<reference key="1">
    <citation type="submission" date="2008-03" db="EMBL/GenBank/DDBJ databases">
        <title>Complete sequence of Leptothrix cholodnii SP-6.</title>
        <authorList>
            <consortium name="US DOE Joint Genome Institute"/>
            <person name="Copeland A."/>
            <person name="Lucas S."/>
            <person name="Lapidus A."/>
            <person name="Glavina del Rio T."/>
            <person name="Dalin E."/>
            <person name="Tice H."/>
            <person name="Bruce D."/>
            <person name="Goodwin L."/>
            <person name="Pitluck S."/>
            <person name="Chertkov O."/>
            <person name="Brettin T."/>
            <person name="Detter J.C."/>
            <person name="Han C."/>
            <person name="Kuske C.R."/>
            <person name="Schmutz J."/>
            <person name="Larimer F."/>
            <person name="Land M."/>
            <person name="Hauser L."/>
            <person name="Kyrpides N."/>
            <person name="Lykidis A."/>
            <person name="Emerson D."/>
            <person name="Richardson P."/>
        </authorList>
    </citation>
    <scope>NUCLEOTIDE SEQUENCE [LARGE SCALE GENOMIC DNA]</scope>
    <source>
        <strain>ATCC 51168 / LMG 8142 / SP-6</strain>
    </source>
</reference>
<dbReference type="EC" id="6.1.1.19" evidence="1"/>
<dbReference type="EMBL" id="CP001013">
    <property type="protein sequence ID" value="ACB36481.1"/>
    <property type="molecule type" value="Genomic_DNA"/>
</dbReference>
<dbReference type="RefSeq" id="WP_012349222.1">
    <property type="nucleotide sequence ID" value="NC_010524.1"/>
</dbReference>
<dbReference type="SMR" id="B1XYP5"/>
<dbReference type="STRING" id="395495.Lcho_4230"/>
<dbReference type="KEGG" id="lch:Lcho_4230"/>
<dbReference type="eggNOG" id="COG0018">
    <property type="taxonomic scope" value="Bacteria"/>
</dbReference>
<dbReference type="HOGENOM" id="CLU_006406_0_1_4"/>
<dbReference type="OrthoDB" id="9803211at2"/>
<dbReference type="Proteomes" id="UP000001693">
    <property type="component" value="Chromosome"/>
</dbReference>
<dbReference type="GO" id="GO:0005737">
    <property type="term" value="C:cytoplasm"/>
    <property type="evidence" value="ECO:0007669"/>
    <property type="project" value="UniProtKB-SubCell"/>
</dbReference>
<dbReference type="GO" id="GO:0004814">
    <property type="term" value="F:arginine-tRNA ligase activity"/>
    <property type="evidence" value="ECO:0007669"/>
    <property type="project" value="UniProtKB-UniRule"/>
</dbReference>
<dbReference type="GO" id="GO:0005524">
    <property type="term" value="F:ATP binding"/>
    <property type="evidence" value="ECO:0007669"/>
    <property type="project" value="UniProtKB-UniRule"/>
</dbReference>
<dbReference type="GO" id="GO:0006420">
    <property type="term" value="P:arginyl-tRNA aminoacylation"/>
    <property type="evidence" value="ECO:0007669"/>
    <property type="project" value="UniProtKB-UniRule"/>
</dbReference>
<dbReference type="CDD" id="cd00671">
    <property type="entry name" value="ArgRS_core"/>
    <property type="match status" value="1"/>
</dbReference>
<dbReference type="FunFam" id="1.10.730.10:FF:000008">
    <property type="entry name" value="Arginine--tRNA ligase"/>
    <property type="match status" value="1"/>
</dbReference>
<dbReference type="FunFam" id="3.40.50.620:FF:000062">
    <property type="entry name" value="Arginine--tRNA ligase"/>
    <property type="match status" value="1"/>
</dbReference>
<dbReference type="Gene3D" id="3.30.1360.70">
    <property type="entry name" value="Arginyl tRNA synthetase N-terminal domain"/>
    <property type="match status" value="1"/>
</dbReference>
<dbReference type="Gene3D" id="3.40.50.620">
    <property type="entry name" value="HUPs"/>
    <property type="match status" value="1"/>
</dbReference>
<dbReference type="Gene3D" id="1.10.730.10">
    <property type="entry name" value="Isoleucyl-tRNA Synthetase, Domain 1"/>
    <property type="match status" value="1"/>
</dbReference>
<dbReference type="HAMAP" id="MF_00123">
    <property type="entry name" value="Arg_tRNA_synth"/>
    <property type="match status" value="1"/>
</dbReference>
<dbReference type="InterPro" id="IPR001412">
    <property type="entry name" value="aa-tRNA-synth_I_CS"/>
</dbReference>
<dbReference type="InterPro" id="IPR001278">
    <property type="entry name" value="Arg-tRNA-ligase"/>
</dbReference>
<dbReference type="InterPro" id="IPR005148">
    <property type="entry name" value="Arg-tRNA-synth_N"/>
</dbReference>
<dbReference type="InterPro" id="IPR036695">
    <property type="entry name" value="Arg-tRNA-synth_N_sf"/>
</dbReference>
<dbReference type="InterPro" id="IPR035684">
    <property type="entry name" value="ArgRS_core"/>
</dbReference>
<dbReference type="InterPro" id="IPR008909">
    <property type="entry name" value="DALR_anticod-bd"/>
</dbReference>
<dbReference type="InterPro" id="IPR014729">
    <property type="entry name" value="Rossmann-like_a/b/a_fold"/>
</dbReference>
<dbReference type="InterPro" id="IPR009080">
    <property type="entry name" value="tRNAsynth_Ia_anticodon-bd"/>
</dbReference>
<dbReference type="NCBIfam" id="TIGR00456">
    <property type="entry name" value="argS"/>
    <property type="match status" value="1"/>
</dbReference>
<dbReference type="PANTHER" id="PTHR11956:SF5">
    <property type="entry name" value="ARGININE--TRNA LIGASE, CYTOPLASMIC"/>
    <property type="match status" value="1"/>
</dbReference>
<dbReference type="PANTHER" id="PTHR11956">
    <property type="entry name" value="ARGINYL-TRNA SYNTHETASE"/>
    <property type="match status" value="1"/>
</dbReference>
<dbReference type="Pfam" id="PF03485">
    <property type="entry name" value="Arg_tRNA_synt_N"/>
    <property type="match status" value="1"/>
</dbReference>
<dbReference type="Pfam" id="PF05746">
    <property type="entry name" value="DALR_1"/>
    <property type="match status" value="1"/>
</dbReference>
<dbReference type="Pfam" id="PF00750">
    <property type="entry name" value="tRNA-synt_1d"/>
    <property type="match status" value="1"/>
</dbReference>
<dbReference type="PRINTS" id="PR01038">
    <property type="entry name" value="TRNASYNTHARG"/>
</dbReference>
<dbReference type="SMART" id="SM01016">
    <property type="entry name" value="Arg_tRNA_synt_N"/>
    <property type="match status" value="1"/>
</dbReference>
<dbReference type="SMART" id="SM00836">
    <property type="entry name" value="DALR_1"/>
    <property type="match status" value="1"/>
</dbReference>
<dbReference type="SUPFAM" id="SSF47323">
    <property type="entry name" value="Anticodon-binding domain of a subclass of class I aminoacyl-tRNA synthetases"/>
    <property type="match status" value="1"/>
</dbReference>
<dbReference type="SUPFAM" id="SSF55190">
    <property type="entry name" value="Arginyl-tRNA synthetase (ArgRS), N-terminal 'additional' domain"/>
    <property type="match status" value="1"/>
</dbReference>
<dbReference type="SUPFAM" id="SSF52374">
    <property type="entry name" value="Nucleotidylyl transferase"/>
    <property type="match status" value="1"/>
</dbReference>
<dbReference type="PROSITE" id="PS00178">
    <property type="entry name" value="AA_TRNA_LIGASE_I"/>
    <property type="match status" value="1"/>
</dbReference>
<evidence type="ECO:0000255" key="1">
    <source>
        <dbReference type="HAMAP-Rule" id="MF_00123"/>
    </source>
</evidence>
<accession>B1XYP5</accession>